<evidence type="ECO:0000255" key="1">
    <source>
        <dbReference type="PROSITE-ProRule" id="PRU00089"/>
    </source>
</evidence>
<evidence type="ECO:0000256" key="2">
    <source>
        <dbReference type="SAM" id="MobiDB-lite"/>
    </source>
</evidence>
<evidence type="ECO:0000269" key="3">
    <source>
    </source>
</evidence>
<evidence type="ECO:0000269" key="4">
    <source>
    </source>
</evidence>
<evidence type="ECO:0000269" key="5">
    <source>
    </source>
</evidence>
<evidence type="ECO:0000269" key="6">
    <source>
    </source>
</evidence>
<evidence type="ECO:0000305" key="7"/>
<organism>
    <name type="scientific">Homo sapiens</name>
    <name type="common">Human</name>
    <dbReference type="NCBI Taxonomy" id="9606"/>
    <lineage>
        <taxon>Eukaryota</taxon>
        <taxon>Metazoa</taxon>
        <taxon>Chordata</taxon>
        <taxon>Craniata</taxon>
        <taxon>Vertebrata</taxon>
        <taxon>Euteleostomi</taxon>
        <taxon>Mammalia</taxon>
        <taxon>Eutheria</taxon>
        <taxon>Euarchontoglires</taxon>
        <taxon>Primates</taxon>
        <taxon>Haplorrhini</taxon>
        <taxon>Catarrhini</taxon>
        <taxon>Hominidae</taxon>
        <taxon>Homo</taxon>
    </lineage>
</organism>
<feature type="chain" id="PRO_0000091832" description="Forkhead box protein F1">
    <location>
        <begin position="1"/>
        <end position="379"/>
    </location>
</feature>
<feature type="DNA-binding region" description="Fork-head" evidence="1">
    <location>
        <begin position="47"/>
        <end position="138"/>
    </location>
</feature>
<feature type="region of interest" description="Disordered" evidence="2">
    <location>
        <begin position="1"/>
        <end position="45"/>
    </location>
</feature>
<feature type="compositionally biased region" description="Gly residues" evidence="2">
    <location>
        <begin position="12"/>
        <end position="24"/>
    </location>
</feature>
<feature type="sequence variant" id="VAR_071016" description="In ACDMPV." evidence="4">
    <original>P</original>
    <variation>Q</variation>
    <location>
        <position position="49"/>
    </location>
</feature>
<feature type="sequence variant" id="VAR_071017" description="In ACDMPV; dbSNP:rs1597291206." evidence="4">
    <original>P</original>
    <variation>S</variation>
    <location>
        <position position="49"/>
    </location>
</feature>
<feature type="sequence variant" id="VAR_071018" description="In ACDMPV." evidence="4">
    <original>S</original>
    <variation>F</variation>
    <location>
        <position position="52"/>
    </location>
</feature>
<feature type="sequence variant" id="VAR_071019" description="In ACDMPV." evidence="4">
    <original>Y</original>
    <variation>C</variation>
    <location>
        <position position="53"/>
    </location>
</feature>
<feature type="sequence variant" id="VAR_071020" description="In ACDMPV; dbSNP:rs1597291255." evidence="4">
    <original>I</original>
    <variation>N</variation>
    <location>
        <position position="74"/>
    </location>
</feature>
<feature type="sequence variant" id="VAR_076592" description="In ACDMPV." evidence="5">
    <original>F</original>
    <variation>L</variation>
    <location>
        <position position="77"/>
    </location>
</feature>
<feature type="sequence variant" id="VAR_071021" description="In ACDMPV." evidence="4">
    <original>F</original>
    <variation>I</variation>
    <location>
        <position position="85"/>
    </location>
</feature>
<feature type="sequence variant" id="VAR_071022" description="In ACDMPV; dbSNP:rs1969550135." evidence="4">
    <original>F</original>
    <variation>L</variation>
    <location>
        <position position="85"/>
    </location>
</feature>
<feature type="sequence variant" id="VAR_071023" description="In ACDMPV." evidence="4">
    <original>F</original>
    <variation>S</variation>
    <location>
        <position position="85"/>
    </location>
</feature>
<feature type="sequence variant" id="VAR_071024" description="In ACDMPV." evidence="4">
    <original>R</original>
    <variation>W</variation>
    <location>
        <position position="86"/>
    </location>
</feature>
<feature type="sequence variant" id="VAR_071025" description="In ACDMPV." evidence="4">
    <original>G</original>
    <variation>E</variation>
    <location>
        <position position="91"/>
    </location>
</feature>
<feature type="sequence variant" id="VAR_071026" description="In ACDMPV." evidence="4">
    <original>G</original>
    <variation>V</variation>
    <location>
        <position position="91"/>
    </location>
</feature>
<feature type="sequence variant" id="VAR_071027" description="In ACDMPV." evidence="4">
    <original>V</original>
    <variation>M</variation>
    <location>
        <position position="96"/>
    </location>
</feature>
<feature type="sequence variant" id="VAR_071028" description="In ACDMPV." evidence="4">
    <original>R</original>
    <variation>H</variation>
    <location>
        <position position="97"/>
    </location>
</feature>
<feature type="sequence variant" id="VAR_071029" description="In ACDMPV; dbSNP:rs1597291300." evidence="4">
    <original>H</original>
    <variation>Q</variation>
    <location>
        <position position="98"/>
    </location>
</feature>
<feature type="sequence variant" id="VAR_071030" description="In ACDMPV; dbSNP:rs1969550671." evidence="4">
    <original>S</original>
    <variation>L</variation>
    <location>
        <position position="101"/>
    </location>
</feature>
<feature type="sequence variant" id="VAR_071031" description="In ACDMPV; dbSNP:rs1597291318." evidence="4">
    <original>F</original>
    <variation>L</variation>
    <location>
        <position position="106"/>
    </location>
</feature>
<feature type="sequence variant" id="VAR_071032" description="In ACDMPV." evidence="4">
    <location>
        <begin position="113"/>
        <end position="119"/>
    </location>
</feature>
<feature type="sequence variant" id="VAR_071033" description="In ACDMPV." evidence="4">
    <original>G</original>
    <variation>D</variation>
    <location>
        <position position="119"/>
    </location>
</feature>
<feature type="sequence variant" id="VAR_071034" description="In ACDMPV." evidence="4">
    <original>P</original>
    <variation>L</variation>
    <location>
        <position position="126"/>
    </location>
</feature>
<feature type="sequence variant" id="VAR_071035" description="In ACDMPV." evidence="4">
    <original>R</original>
    <variation>L</variation>
    <location>
        <position position="139"/>
    </location>
</feature>
<feature type="sequence variant" id="VAR_071036" description="In ACDMPV; uncertain significance; dbSNP:rs761162914." evidence="4">
    <original>R</original>
    <variation>W</variation>
    <location>
        <position position="330"/>
    </location>
</feature>
<accession>Q12946</accession>
<accession>B2RAF4</accession>
<accession>Q5FWE5</accession>
<gene>
    <name type="primary">FOXF1</name>
    <name type="synonym">FKHL5</name>
    <name type="synonym">FREAC1</name>
</gene>
<sequence>MSSAPEKQQPPHGGGGGGGGGGGAAMDPASSGPSKAKKTNAGIRRPEKPPYSYIALIVMAIQSSPTKRLTLSEIYQFLQSRFPFFRGSYQGWKNSVRHNLSLNECFIKLPKGLGRPGKGHYWTIDPASEFMFEEGSFRRRPRGFRRKCQALKPMYSMMNGLGFNHLPDTYGFQGSAGGLSCPPNSLALEGGLGMMNGHLPGNVDGMALPSHSVPHLPSNGGHSYMGGCGGAAAGEYPHHDSSVPASPLLPTGAGGVMEPHAVYSGSAAAWPPSASAALNSGASYIKQQPLSPCNPAANPLSGSLSTHSLEQPYLHQNSHNAPAELQGIPRYHSQSPSMCDRKEFVFSFNAMASSSMHSAGGGSYYHQQVTYQDIKPCVM</sequence>
<keyword id="KW-0010">Activator</keyword>
<keyword id="KW-0225">Disease variant</keyword>
<keyword id="KW-0238">DNA-binding</keyword>
<keyword id="KW-0539">Nucleus</keyword>
<keyword id="KW-1267">Proteomics identification</keyword>
<keyword id="KW-1185">Reference proteome</keyword>
<keyword id="KW-0804">Transcription</keyword>
<keyword id="KW-0805">Transcription regulation</keyword>
<proteinExistence type="evidence at protein level"/>
<protein>
    <recommendedName>
        <fullName>Forkhead box protein F1</fullName>
    </recommendedName>
    <alternativeName>
        <fullName>Forkhead-related activator 1</fullName>
        <shortName>FREAC-1</shortName>
    </alternativeName>
    <alternativeName>
        <fullName>Forkhead-related protein FKHL5</fullName>
    </alternativeName>
    <alternativeName>
        <fullName>Forkhead-related transcription factor 1</fullName>
    </alternativeName>
</protein>
<comment type="function">
    <text>Probable transcription activator for a number of lung-specific genes.</text>
</comment>
<comment type="subcellular location">
    <subcellularLocation>
        <location evidence="7">Nucleus</location>
    </subcellularLocation>
</comment>
<comment type="tissue specificity">
    <text evidence="6">Expressed in lung and placenta.</text>
</comment>
<comment type="developmental stage">
    <text evidence="6">Expressed in fetal lung.</text>
</comment>
<comment type="domain">
    <text>Activation domains C-terminal of (and distinct from) the forkhead domains are necessary for transcriptional activation.</text>
</comment>
<comment type="disease" evidence="3 4 5">
    <disease id="DI-02714">
        <name>Alveolar capillary dysplasia with misalignment of pulmonary veins</name>
        <acronym>ACDMPV</acronym>
        <description>A rare developmental disorder characterized by abnormal development of the capillary vascular system in the lungs. Histological features include failure of formation and ingrowth of alveolar capillaries, medial muscular thickening of small pulmonary arterioles with muscularization of the intraacinar arterioles, thickened alveolar walls, and anomalously situated pulmonary veins running alongside pulmonary arterioles and sharing the same adventitial sheath. Less common features include a reduced number of alveoli and a patchy distribution of the histopathologic changes. Affected infants present with respiratory distress and the disease is fatal within the newborn period. Additional features include multiple congenital anomalies affecting the cardiovascular, gastrointestinal, genitourinary, and musculoskeletal systems, as well as disruption of the normal right-left asymmetry of intrathoracic or intraabdominal organs. ACDMPV is a rare cause of persistent pulmonary hypertension of the newborn, an abnormal physiologic state caused by failure of transition of the pulmonary circulation from the high pulmonary vascular resistance of the fetus to the low pulmonary vascular resistance of the newborn.</description>
        <dbReference type="MIM" id="265380"/>
    </disease>
    <text>The disease is caused by variants affecting the gene represented in this entry.</text>
</comment>
<comment type="caution">
    <text evidence="7">It is uncertain whether Met-1 or Met-26 is the initiator.</text>
</comment>
<comment type="sequence caution" evidence="7">
    <conflict type="erroneous initiation">
        <sequence resource="EMBL-CDS" id="AAC50399"/>
    </conflict>
</comment>
<comment type="sequence caution" evidence="7">
    <conflict type="erroneous initiation">
        <sequence resource="EMBL-CDS" id="AAC61576"/>
    </conflict>
</comment>
<comment type="sequence caution" evidence="7">
    <conflict type="erroneous initiation">
        <sequence resource="EMBL-CDS" id="AAH89442"/>
    </conflict>
</comment>
<comment type="sequence caution" evidence="7">
    <conflict type="frameshift">
        <sequence resource="EMBL-CDS" id="BAG36851"/>
    </conflict>
</comment>
<comment type="online information" name="Atlas of Genetics and Cytogenetics in Oncology and Haematology">
    <link uri="https://atlasgeneticsoncology.org/gene/40628/FOXF1"/>
</comment>
<reference key="1">
    <citation type="journal article" date="1996" name="J. Biol. Chem.">
        <title>Differential activation of lung-specific genes by two forkhead proteins, FREAC-1 and FREAC-2.</title>
        <authorList>
            <person name="Hellqvist M."/>
            <person name="Mahlapuu M."/>
            <person name="Samuelsson L."/>
            <person name="Enerbaeck S."/>
            <person name="Carlsson P."/>
        </authorList>
    </citation>
    <scope>NUCLEOTIDE SEQUENCE [MRNA]</scope>
    <scope>PROBABLE FUNCTION</scope>
    <source>
        <tissue>Lung</tissue>
    </source>
</reference>
<reference key="2">
    <citation type="journal article" date="1998" name="Dev. Biol.">
        <title>FREAC-1 contains a cell-type-specific transcriptional activation domain and is expressed in epithelial-mesenchymal interfaces.</title>
        <authorList>
            <person name="Mahlapuu M."/>
            <person name="Pelto-Huikko M."/>
            <person name="Aitola M."/>
            <person name="Enerbaeck S."/>
            <person name="Carlsson P."/>
        </authorList>
    </citation>
    <scope>NUCLEOTIDE SEQUENCE [GENOMIC DNA]</scope>
</reference>
<reference key="3">
    <citation type="journal article" date="2004" name="Nat. Genet.">
        <title>Complete sequencing and characterization of 21,243 full-length human cDNAs.</title>
        <authorList>
            <person name="Ota T."/>
            <person name="Suzuki Y."/>
            <person name="Nishikawa T."/>
            <person name="Otsuki T."/>
            <person name="Sugiyama T."/>
            <person name="Irie R."/>
            <person name="Wakamatsu A."/>
            <person name="Hayashi K."/>
            <person name="Sato H."/>
            <person name="Nagai K."/>
            <person name="Kimura K."/>
            <person name="Makita H."/>
            <person name="Sekine M."/>
            <person name="Obayashi M."/>
            <person name="Nishi T."/>
            <person name="Shibahara T."/>
            <person name="Tanaka T."/>
            <person name="Ishii S."/>
            <person name="Yamamoto J."/>
            <person name="Saito K."/>
            <person name="Kawai Y."/>
            <person name="Isono Y."/>
            <person name="Nakamura Y."/>
            <person name="Nagahari K."/>
            <person name="Murakami K."/>
            <person name="Yasuda T."/>
            <person name="Iwayanagi T."/>
            <person name="Wagatsuma M."/>
            <person name="Shiratori A."/>
            <person name="Sudo H."/>
            <person name="Hosoiri T."/>
            <person name="Kaku Y."/>
            <person name="Kodaira H."/>
            <person name="Kondo H."/>
            <person name="Sugawara M."/>
            <person name="Takahashi M."/>
            <person name="Kanda K."/>
            <person name="Yokoi T."/>
            <person name="Furuya T."/>
            <person name="Kikkawa E."/>
            <person name="Omura Y."/>
            <person name="Abe K."/>
            <person name="Kamihara K."/>
            <person name="Katsuta N."/>
            <person name="Sato K."/>
            <person name="Tanikawa M."/>
            <person name="Yamazaki M."/>
            <person name="Ninomiya K."/>
            <person name="Ishibashi T."/>
            <person name="Yamashita H."/>
            <person name="Murakawa K."/>
            <person name="Fujimori K."/>
            <person name="Tanai H."/>
            <person name="Kimata M."/>
            <person name="Watanabe M."/>
            <person name="Hiraoka S."/>
            <person name="Chiba Y."/>
            <person name="Ishida S."/>
            <person name="Ono Y."/>
            <person name="Takiguchi S."/>
            <person name="Watanabe S."/>
            <person name="Yosida M."/>
            <person name="Hotuta T."/>
            <person name="Kusano J."/>
            <person name="Kanehori K."/>
            <person name="Takahashi-Fujii A."/>
            <person name="Hara H."/>
            <person name="Tanase T.-O."/>
            <person name="Nomura Y."/>
            <person name="Togiya S."/>
            <person name="Komai F."/>
            <person name="Hara R."/>
            <person name="Takeuchi K."/>
            <person name="Arita M."/>
            <person name="Imose N."/>
            <person name="Musashino K."/>
            <person name="Yuuki H."/>
            <person name="Oshima A."/>
            <person name="Sasaki N."/>
            <person name="Aotsuka S."/>
            <person name="Yoshikawa Y."/>
            <person name="Matsunawa H."/>
            <person name="Ichihara T."/>
            <person name="Shiohata N."/>
            <person name="Sano S."/>
            <person name="Moriya S."/>
            <person name="Momiyama H."/>
            <person name="Satoh N."/>
            <person name="Takami S."/>
            <person name="Terashima Y."/>
            <person name="Suzuki O."/>
            <person name="Nakagawa S."/>
            <person name="Senoh A."/>
            <person name="Mizoguchi H."/>
            <person name="Goto Y."/>
            <person name="Shimizu F."/>
            <person name="Wakebe H."/>
            <person name="Hishigaki H."/>
            <person name="Watanabe T."/>
            <person name="Sugiyama A."/>
            <person name="Takemoto M."/>
            <person name="Kawakami B."/>
            <person name="Yamazaki M."/>
            <person name="Watanabe K."/>
            <person name="Kumagai A."/>
            <person name="Itakura S."/>
            <person name="Fukuzumi Y."/>
            <person name="Fujimori Y."/>
            <person name="Komiyama M."/>
            <person name="Tashiro H."/>
            <person name="Tanigami A."/>
            <person name="Fujiwara T."/>
            <person name="Ono T."/>
            <person name="Yamada K."/>
            <person name="Fujii Y."/>
            <person name="Ozaki K."/>
            <person name="Hirao M."/>
            <person name="Ohmori Y."/>
            <person name="Kawabata A."/>
            <person name="Hikiji T."/>
            <person name="Kobatake N."/>
            <person name="Inagaki H."/>
            <person name="Ikema Y."/>
            <person name="Okamoto S."/>
            <person name="Okitani R."/>
            <person name="Kawakami T."/>
            <person name="Noguchi S."/>
            <person name="Itoh T."/>
            <person name="Shigeta K."/>
            <person name="Senba T."/>
            <person name="Matsumura K."/>
            <person name="Nakajima Y."/>
            <person name="Mizuno T."/>
            <person name="Morinaga M."/>
            <person name="Sasaki M."/>
            <person name="Togashi T."/>
            <person name="Oyama M."/>
            <person name="Hata H."/>
            <person name="Watanabe M."/>
            <person name="Komatsu T."/>
            <person name="Mizushima-Sugano J."/>
            <person name="Satoh T."/>
            <person name="Shirai Y."/>
            <person name="Takahashi Y."/>
            <person name="Nakagawa K."/>
            <person name="Okumura K."/>
            <person name="Nagase T."/>
            <person name="Nomura N."/>
            <person name="Kikuchi H."/>
            <person name="Masuho Y."/>
            <person name="Yamashita R."/>
            <person name="Nakai K."/>
            <person name="Yada T."/>
            <person name="Nakamura Y."/>
            <person name="Ohara O."/>
            <person name="Isogai T."/>
            <person name="Sugano S."/>
        </authorList>
    </citation>
    <scope>NUCLEOTIDE SEQUENCE [LARGE SCALE MRNA]</scope>
    <source>
        <tissue>Colon</tissue>
    </source>
</reference>
<reference key="4">
    <citation type="journal article" date="2004" name="Nature">
        <title>The sequence and analysis of duplication-rich human chromosome 16.</title>
        <authorList>
            <person name="Martin J."/>
            <person name="Han C."/>
            <person name="Gordon L.A."/>
            <person name="Terry A."/>
            <person name="Prabhakar S."/>
            <person name="She X."/>
            <person name="Xie G."/>
            <person name="Hellsten U."/>
            <person name="Chan Y.M."/>
            <person name="Altherr M."/>
            <person name="Couronne O."/>
            <person name="Aerts A."/>
            <person name="Bajorek E."/>
            <person name="Black S."/>
            <person name="Blumer H."/>
            <person name="Branscomb E."/>
            <person name="Brown N.C."/>
            <person name="Bruno W.J."/>
            <person name="Buckingham J.M."/>
            <person name="Callen D.F."/>
            <person name="Campbell C.S."/>
            <person name="Campbell M.L."/>
            <person name="Campbell E.W."/>
            <person name="Caoile C."/>
            <person name="Challacombe J.F."/>
            <person name="Chasteen L.A."/>
            <person name="Chertkov O."/>
            <person name="Chi H.C."/>
            <person name="Christensen M."/>
            <person name="Clark L.M."/>
            <person name="Cohn J.D."/>
            <person name="Denys M."/>
            <person name="Detter J.C."/>
            <person name="Dickson M."/>
            <person name="Dimitrijevic-Bussod M."/>
            <person name="Escobar J."/>
            <person name="Fawcett J.J."/>
            <person name="Flowers D."/>
            <person name="Fotopulos D."/>
            <person name="Glavina T."/>
            <person name="Gomez M."/>
            <person name="Gonzales E."/>
            <person name="Goodstein D."/>
            <person name="Goodwin L.A."/>
            <person name="Grady D.L."/>
            <person name="Grigoriev I."/>
            <person name="Groza M."/>
            <person name="Hammon N."/>
            <person name="Hawkins T."/>
            <person name="Haydu L."/>
            <person name="Hildebrand C.E."/>
            <person name="Huang W."/>
            <person name="Israni S."/>
            <person name="Jett J."/>
            <person name="Jewett P.B."/>
            <person name="Kadner K."/>
            <person name="Kimball H."/>
            <person name="Kobayashi A."/>
            <person name="Krawczyk M.-C."/>
            <person name="Leyba T."/>
            <person name="Longmire J.L."/>
            <person name="Lopez F."/>
            <person name="Lou Y."/>
            <person name="Lowry S."/>
            <person name="Ludeman T."/>
            <person name="Manohar C.F."/>
            <person name="Mark G.A."/>
            <person name="McMurray K.L."/>
            <person name="Meincke L.J."/>
            <person name="Morgan J."/>
            <person name="Moyzis R.K."/>
            <person name="Mundt M.O."/>
            <person name="Munk A.C."/>
            <person name="Nandkeshwar R.D."/>
            <person name="Pitluck S."/>
            <person name="Pollard M."/>
            <person name="Predki P."/>
            <person name="Parson-Quintana B."/>
            <person name="Ramirez L."/>
            <person name="Rash S."/>
            <person name="Retterer J."/>
            <person name="Ricke D.O."/>
            <person name="Robinson D.L."/>
            <person name="Rodriguez A."/>
            <person name="Salamov A."/>
            <person name="Saunders E.H."/>
            <person name="Scott D."/>
            <person name="Shough T."/>
            <person name="Stallings R.L."/>
            <person name="Stalvey M."/>
            <person name="Sutherland R.D."/>
            <person name="Tapia R."/>
            <person name="Tesmer J.G."/>
            <person name="Thayer N."/>
            <person name="Thompson L.S."/>
            <person name="Tice H."/>
            <person name="Torney D.C."/>
            <person name="Tran-Gyamfi M."/>
            <person name="Tsai M."/>
            <person name="Ulanovsky L.E."/>
            <person name="Ustaszewska A."/>
            <person name="Vo N."/>
            <person name="White P.S."/>
            <person name="Williams A.L."/>
            <person name="Wills P.L."/>
            <person name="Wu J.-R."/>
            <person name="Wu K."/>
            <person name="Yang J."/>
            <person name="DeJong P."/>
            <person name="Bruce D."/>
            <person name="Doggett N.A."/>
            <person name="Deaven L."/>
            <person name="Schmutz J."/>
            <person name="Grimwood J."/>
            <person name="Richardson P."/>
            <person name="Rokhsar D.S."/>
            <person name="Eichler E.E."/>
            <person name="Gilna P."/>
            <person name="Lucas S.M."/>
            <person name="Myers R.M."/>
            <person name="Rubin E.M."/>
            <person name="Pennacchio L.A."/>
        </authorList>
    </citation>
    <scope>NUCLEOTIDE SEQUENCE [LARGE SCALE GENOMIC DNA]</scope>
</reference>
<reference key="5">
    <citation type="journal article" date="2004" name="Genome Res.">
        <title>The status, quality, and expansion of the NIH full-length cDNA project: the Mammalian Gene Collection (MGC).</title>
        <authorList>
            <consortium name="The MGC Project Team"/>
        </authorList>
    </citation>
    <scope>NUCLEOTIDE SEQUENCE [LARGE SCALE MRNA]</scope>
    <source>
        <tissue>Chondrosarcoma</tissue>
    </source>
</reference>
<reference key="6">
    <citation type="journal article" date="1994" name="EMBO J.">
        <title>Cloning and characterization of seven human forkhead proteins: binding site specificity and DNA bending.</title>
        <authorList>
            <person name="Pierrou S."/>
            <person name="Hellqvist M."/>
            <person name="Samuelsson L."/>
            <person name="Enerbaeck S."/>
            <person name="Carlsson P."/>
        </authorList>
    </citation>
    <scope>PARTIAL NUCLEOTIDE SEQUENCE [MRNA]</scope>
    <scope>TISSUE SPECIFICITY</scope>
    <scope>DEVELOPMENTAL STAGE</scope>
    <source>
        <tissue>Fetus</tissue>
    </source>
</reference>
<reference key="7">
    <citation type="journal article" date="2009" name="Am. J. Hum. Genet.">
        <title>Genomic and genic deletions of the FOX gene cluster on 16q24.1 and inactivating mutations of FOXF1 cause alveolar capillary dysplasia and other malformations.</title>
        <authorList>
            <person name="Stankiewicz P."/>
            <person name="Sen P."/>
            <person name="Bhatt S.S."/>
            <person name="Storer M."/>
            <person name="Xia Z."/>
            <person name="Bejjani B.A."/>
            <person name="Ou Z."/>
            <person name="Wiszniewska J."/>
            <person name="Driscoll D.J."/>
            <person name="Maisenbacher M.K."/>
            <person name="Bolivar J."/>
            <person name="Bauer M."/>
            <person name="Zackai E.H."/>
            <person name="McDonald-McGinn D."/>
            <person name="Nowaczyk M.M."/>
            <person name="Murray M."/>
            <person name="Hustead V."/>
            <person name="Mascotti K."/>
            <person name="Schultz R."/>
            <person name="Hallam L."/>
            <person name="McRae D."/>
            <person name="Nicholson A.G."/>
            <person name="Newbury R."/>
            <person name="Durham-O'Donnell J."/>
            <person name="Knight G."/>
            <person name="Kini U."/>
            <person name="Shaikh T.H."/>
            <person name="Martin V."/>
            <person name="Tyreman M."/>
            <person name="Simonic I."/>
            <person name="Willatt L."/>
            <person name="Paterson J."/>
            <person name="Mehta S."/>
            <person name="Rajan D."/>
            <person name="Fitzgerald T."/>
            <person name="Gribble S."/>
            <person name="Prigmore E."/>
            <person name="Patel A."/>
            <person name="Shaffer L.G."/>
            <person name="Carter N.P."/>
            <person name="Cheung S.W."/>
            <person name="Langston C."/>
            <person name="Shaw-Smith C."/>
        </authorList>
    </citation>
    <scope>INVOLVEMENT IN ACDMPV</scope>
</reference>
<reference key="8">
    <citation type="journal article" date="2013" name="Hum. Mutat.">
        <title>Novel FOXF1 mutations in sporadic and familial cases of alveolar capillary dysplasia with misaligned pulmonary veins imply a role for its DNA binding domain.</title>
        <authorList>
            <person name="Sen P."/>
            <person name="Yang Y."/>
            <person name="Navarro C."/>
            <person name="Silva I."/>
            <person name="Szafranski P."/>
            <person name="Kolodziejska K.E."/>
            <person name="Dharmadhikari A.V."/>
            <person name="Mostafa H."/>
            <person name="Kozakewich H."/>
            <person name="Kearney D."/>
            <person name="Cahill J.B."/>
            <person name="Whitt M."/>
            <person name="Bilic M."/>
            <person name="Margraf L."/>
            <person name="Charles A."/>
            <person name="Goldblatt J."/>
            <person name="Gibson K."/>
            <person name="Lantz P.E."/>
            <person name="Garvin A.J."/>
            <person name="Petty J."/>
            <person name="Kiblawi Z."/>
            <person name="Zuppan C."/>
            <person name="McConkie-Rosell A."/>
            <person name="McDonald M.T."/>
            <person name="Peterson-Carmichael S.L."/>
            <person name="Gaede J.T."/>
            <person name="Shivanna B."/>
            <person name="Schady D."/>
            <person name="Friedlich P.S."/>
            <person name="Hays S.R."/>
            <person name="Palafoll I.V."/>
            <person name="Siebers-Renelt U."/>
            <person name="Bohring A."/>
            <person name="Finn L.S."/>
            <person name="Siebert J.R."/>
            <person name="Galambos C."/>
            <person name="Nguyen L."/>
            <person name="Riley M."/>
            <person name="Chassaing N."/>
            <person name="Vigouroux A."/>
            <person name="Rocha G."/>
            <person name="Fernandes S."/>
            <person name="Brumbaugh J."/>
            <person name="Roberts K."/>
            <person name="Ho-Ming L."/>
            <person name="Lo I.F."/>
            <person name="Lam S."/>
            <person name="Gerychova R."/>
            <person name="Jezova M."/>
            <person name="Valaskova I."/>
            <person name="Fellmann F."/>
            <person name="Afshar K."/>
            <person name="Giannoni E."/>
            <person name="Muhlethaler V."/>
            <person name="Liang J."/>
            <person name="Beckmann J.S."/>
            <person name="Lioy J."/>
            <person name="Deshmukh H."/>
            <person name="Srinivasan L."/>
            <person name="Swarr D.T."/>
            <person name="Sloman M."/>
            <person name="Shaw-Smith C."/>
            <person name="van Loon R.L."/>
            <person name="Hagman C."/>
            <person name="Sznajer Y."/>
            <person name="Barrea C."/>
            <person name="Galant C."/>
            <person name="Detaille T."/>
            <person name="Wambach J.A."/>
            <person name="Cole F.S."/>
            <person name="Hamvas A."/>
            <person name="Prince L.S."/>
            <person name="Diderich K.E."/>
            <person name="Brooks A.S."/>
            <person name="Verdijk R.M."/>
            <person name="Ravindranathan H."/>
            <person name="Sugo E."/>
            <person name="Mowat D."/>
            <person name="Baker M.L."/>
            <person name="Langston C."/>
            <person name="Welty S."/>
            <person name="Stankiewicz P."/>
        </authorList>
    </citation>
    <scope>VARIANTS ACDMPV GLN-49; SER-49; PHE-52; CYS-53; ASN-74; ILE-85; LEU-85; SER-85; TRP-86; GLU-91; VAL-91; MET-96; HIS-97; GLN-98; LEU-101; LEU-106; 113-LEU--GLY-119 DEL; ASP-119; LEU-126; LEU-139 AND TRP-330</scope>
</reference>
<reference key="9">
    <citation type="journal article" date="2016" name="Pediatr. Pulmonol.">
        <title>Variable phenotypic presentation of a novel FOXF1 missense mutation in a single family.</title>
        <authorList>
            <person name="Reiter J."/>
            <person name="Szafranski P."/>
            <person name="Breuer O."/>
            <person name="Perles Z."/>
            <person name="Dagan T."/>
            <person name="Stankiewicz P."/>
            <person name="Kerem E."/>
        </authorList>
    </citation>
    <scope>VARIANT ACDMPV LEU-77</scope>
</reference>
<dbReference type="EMBL" id="U13219">
    <property type="protein sequence ID" value="AAC50399.1"/>
    <property type="status" value="ALT_INIT"/>
    <property type="molecule type" value="mRNA"/>
</dbReference>
<dbReference type="EMBL" id="AF085343">
    <property type="protein sequence ID" value="AAC61576.1"/>
    <property type="status" value="ALT_INIT"/>
    <property type="molecule type" value="Genomic_DNA"/>
</dbReference>
<dbReference type="EMBL" id="AF085342">
    <property type="protein sequence ID" value="AAC61576.1"/>
    <property type="status" value="JOINED"/>
    <property type="molecule type" value="Genomic_DNA"/>
</dbReference>
<dbReference type="EMBL" id="AK314167">
    <property type="protein sequence ID" value="BAG36851.1"/>
    <property type="status" value="ALT_FRAME"/>
    <property type="molecule type" value="mRNA"/>
</dbReference>
<dbReference type="EMBL" id="AC009108">
    <property type="status" value="NOT_ANNOTATED_CDS"/>
    <property type="molecule type" value="Genomic_DNA"/>
</dbReference>
<dbReference type="EMBL" id="BC089442">
    <property type="protein sequence ID" value="AAH89442.1"/>
    <property type="status" value="ALT_INIT"/>
    <property type="molecule type" value="mRNA"/>
</dbReference>
<dbReference type="CCDS" id="CCDS10957.2"/>
<dbReference type="PIR" id="S51624">
    <property type="entry name" value="S51624"/>
</dbReference>
<dbReference type="RefSeq" id="NP_001442.2">
    <property type="nucleotide sequence ID" value="NM_001451.3"/>
</dbReference>
<dbReference type="SMR" id="Q12946"/>
<dbReference type="BioGRID" id="108583">
    <property type="interactions" value="44"/>
</dbReference>
<dbReference type="FunCoup" id="Q12946">
    <property type="interactions" value="619"/>
</dbReference>
<dbReference type="IntAct" id="Q12946">
    <property type="interactions" value="30"/>
</dbReference>
<dbReference type="MINT" id="Q12946"/>
<dbReference type="STRING" id="9606.ENSP00000262426"/>
<dbReference type="iPTMnet" id="Q12946"/>
<dbReference type="PhosphoSitePlus" id="Q12946"/>
<dbReference type="BioMuta" id="FOXF1"/>
<dbReference type="DMDM" id="238054293"/>
<dbReference type="jPOST" id="Q12946"/>
<dbReference type="MassIVE" id="Q12946"/>
<dbReference type="PaxDb" id="9606-ENSP00000262426"/>
<dbReference type="PeptideAtlas" id="Q12946"/>
<dbReference type="ProteomicsDB" id="59041"/>
<dbReference type="Antibodypedia" id="17194">
    <property type="antibodies" value="247 antibodies from 30 providers"/>
</dbReference>
<dbReference type="DNASU" id="2294"/>
<dbReference type="Ensembl" id="ENST00000262426.6">
    <property type="protein sequence ID" value="ENSP00000262426.4"/>
    <property type="gene ID" value="ENSG00000103241.7"/>
</dbReference>
<dbReference type="GeneID" id="2294"/>
<dbReference type="KEGG" id="hsa:2294"/>
<dbReference type="MANE-Select" id="ENST00000262426.6">
    <property type="protein sequence ID" value="ENSP00000262426.4"/>
    <property type="RefSeq nucleotide sequence ID" value="NM_001451.3"/>
    <property type="RefSeq protein sequence ID" value="NP_001442.2"/>
</dbReference>
<dbReference type="UCSC" id="uc002fjl.4">
    <property type="organism name" value="human"/>
</dbReference>
<dbReference type="AGR" id="HGNC:3809"/>
<dbReference type="CTD" id="2294"/>
<dbReference type="DisGeNET" id="2294"/>
<dbReference type="GeneCards" id="FOXF1"/>
<dbReference type="HGNC" id="HGNC:3809">
    <property type="gene designation" value="FOXF1"/>
</dbReference>
<dbReference type="HPA" id="ENSG00000103241">
    <property type="expression patterns" value="Tissue enhanced (intestine, urinary bladder)"/>
</dbReference>
<dbReference type="MalaCards" id="FOXF1"/>
<dbReference type="MIM" id="265380">
    <property type="type" value="phenotype"/>
</dbReference>
<dbReference type="MIM" id="601089">
    <property type="type" value="gene"/>
</dbReference>
<dbReference type="neXtProt" id="NX_Q12946"/>
<dbReference type="NIAGADS" id="ENSG00000103241"/>
<dbReference type="OpenTargets" id="ENSG00000103241"/>
<dbReference type="Orphanet" id="210122">
    <property type="disease" value="Congenital alveolar capillary dysplasia"/>
</dbReference>
<dbReference type="PharmGKB" id="PA28226"/>
<dbReference type="VEuPathDB" id="HostDB:ENSG00000103241"/>
<dbReference type="eggNOG" id="KOG2294">
    <property type="taxonomic scope" value="Eukaryota"/>
</dbReference>
<dbReference type="GeneTree" id="ENSGT00940000161035"/>
<dbReference type="HOGENOM" id="CLU_039845_1_0_1"/>
<dbReference type="InParanoid" id="Q12946"/>
<dbReference type="OMA" id="KPHGQTA"/>
<dbReference type="OrthoDB" id="5954824at2759"/>
<dbReference type="PAN-GO" id="Q12946">
    <property type="GO annotations" value="5 GO annotations based on evolutionary models"/>
</dbReference>
<dbReference type="PhylomeDB" id="Q12946"/>
<dbReference type="TreeFam" id="TF351598"/>
<dbReference type="PathwayCommons" id="Q12946"/>
<dbReference type="Reactome" id="R-HSA-9758920">
    <property type="pathway name" value="Formation of lateral plate mesoderm"/>
</dbReference>
<dbReference type="Reactome" id="R-HSA-9762293">
    <property type="pathway name" value="Regulation of CDH11 gene transcription"/>
</dbReference>
<dbReference type="SignaLink" id="Q12946"/>
<dbReference type="SIGNOR" id="Q12946"/>
<dbReference type="BioGRID-ORCS" id="2294">
    <property type="hits" value="28 hits in 1175 CRISPR screens"/>
</dbReference>
<dbReference type="GeneWiki" id="FOXF1"/>
<dbReference type="GenomeRNAi" id="2294"/>
<dbReference type="Pharos" id="Q12946">
    <property type="development level" value="Tbio"/>
</dbReference>
<dbReference type="PRO" id="PR:Q12946"/>
<dbReference type="Proteomes" id="UP000005640">
    <property type="component" value="Chromosome 16"/>
</dbReference>
<dbReference type="RNAct" id="Q12946">
    <property type="molecule type" value="protein"/>
</dbReference>
<dbReference type="Bgee" id="ENSG00000103241">
    <property type="expression patterns" value="Expressed in muscle layer of sigmoid colon and 129 other cell types or tissues"/>
</dbReference>
<dbReference type="GO" id="GO:0000785">
    <property type="term" value="C:chromatin"/>
    <property type="evidence" value="ECO:0000247"/>
    <property type="project" value="NTNU_SB"/>
</dbReference>
<dbReference type="GO" id="GO:0005634">
    <property type="term" value="C:nucleus"/>
    <property type="evidence" value="ECO:0000318"/>
    <property type="project" value="GO_Central"/>
</dbReference>
<dbReference type="GO" id="GO:0005667">
    <property type="term" value="C:transcription regulator complex"/>
    <property type="evidence" value="ECO:0000304"/>
    <property type="project" value="ProtInc"/>
</dbReference>
<dbReference type="GO" id="GO:0003677">
    <property type="term" value="F:DNA binding"/>
    <property type="evidence" value="ECO:0000314"/>
    <property type="project" value="UniProtKB"/>
</dbReference>
<dbReference type="GO" id="GO:0001228">
    <property type="term" value="F:DNA-binding transcription activator activity, RNA polymerase II-specific"/>
    <property type="evidence" value="ECO:0000315"/>
    <property type="project" value="NTNU_SB"/>
</dbReference>
<dbReference type="GO" id="GO:0000981">
    <property type="term" value="F:DNA-binding transcription factor activity, RNA polymerase II-specific"/>
    <property type="evidence" value="ECO:0000247"/>
    <property type="project" value="NTNU_SB"/>
</dbReference>
<dbReference type="GO" id="GO:0000978">
    <property type="term" value="F:RNA polymerase II cis-regulatory region sequence-specific DNA binding"/>
    <property type="evidence" value="ECO:0000318"/>
    <property type="project" value="GO_Central"/>
</dbReference>
<dbReference type="GO" id="GO:0000977">
    <property type="term" value="F:RNA polymerase II transcription regulatory region sequence-specific DNA binding"/>
    <property type="evidence" value="ECO:0000315"/>
    <property type="project" value="NTNU_SB"/>
</dbReference>
<dbReference type="GO" id="GO:0043565">
    <property type="term" value="F:sequence-specific DNA binding"/>
    <property type="evidence" value="ECO:0000250"/>
    <property type="project" value="UniProtKB"/>
</dbReference>
<dbReference type="GO" id="GO:0009887">
    <property type="term" value="P:animal organ morphogenesis"/>
    <property type="evidence" value="ECO:0000318"/>
    <property type="project" value="GO_Central"/>
</dbReference>
<dbReference type="GO" id="GO:0001568">
    <property type="term" value="P:blood vessel development"/>
    <property type="evidence" value="ECO:0000315"/>
    <property type="project" value="DFLAT"/>
</dbReference>
<dbReference type="GO" id="GO:0003214">
    <property type="term" value="P:cardiac left ventricle morphogenesis"/>
    <property type="evidence" value="ECO:0000315"/>
    <property type="project" value="DFLAT"/>
</dbReference>
<dbReference type="GO" id="GO:0098609">
    <property type="term" value="P:cell-cell adhesion"/>
    <property type="evidence" value="ECO:0007669"/>
    <property type="project" value="Ensembl"/>
</dbReference>
<dbReference type="GO" id="GO:0071345">
    <property type="term" value="P:cellular response to cytokine stimulus"/>
    <property type="evidence" value="ECO:0007669"/>
    <property type="project" value="Ensembl"/>
</dbReference>
<dbReference type="GO" id="GO:0014822">
    <property type="term" value="P:detection of wounding"/>
    <property type="evidence" value="ECO:0007669"/>
    <property type="project" value="Ensembl"/>
</dbReference>
<dbReference type="GO" id="GO:0007368">
    <property type="term" value="P:determination of left/right symmetry"/>
    <property type="evidence" value="ECO:0007669"/>
    <property type="project" value="Ensembl"/>
</dbReference>
<dbReference type="GO" id="GO:0048565">
    <property type="term" value="P:digestive tract development"/>
    <property type="evidence" value="ECO:0000315"/>
    <property type="project" value="DFLAT"/>
</dbReference>
<dbReference type="GO" id="GO:0097070">
    <property type="term" value="P:ductus arteriosus closure"/>
    <property type="evidence" value="ECO:0000315"/>
    <property type="project" value="DFLAT"/>
</dbReference>
<dbReference type="GO" id="GO:0048557">
    <property type="term" value="P:embryonic digestive tract morphogenesis"/>
    <property type="evidence" value="ECO:0000315"/>
    <property type="project" value="DFLAT"/>
</dbReference>
<dbReference type="GO" id="GO:0048613">
    <property type="term" value="P:embryonic ectodermal digestive tract morphogenesis"/>
    <property type="evidence" value="ECO:0000315"/>
    <property type="project" value="DFLAT"/>
</dbReference>
<dbReference type="GO" id="GO:0048617">
    <property type="term" value="P:embryonic foregut morphogenesis"/>
    <property type="evidence" value="ECO:0007669"/>
    <property type="project" value="Ensembl"/>
</dbReference>
<dbReference type="GO" id="GO:0003197">
    <property type="term" value="P:endocardial cushion development"/>
    <property type="evidence" value="ECO:0000315"/>
    <property type="project" value="DFLAT"/>
</dbReference>
<dbReference type="GO" id="GO:0061030">
    <property type="term" value="P:epithelial cell differentiation involved in mammary gland alveolus development"/>
    <property type="evidence" value="ECO:0007669"/>
    <property type="project" value="Ensembl"/>
</dbReference>
<dbReference type="GO" id="GO:0060441">
    <property type="term" value="P:epithelial tube branching involved in lung morphogenesis"/>
    <property type="evidence" value="ECO:0007669"/>
    <property type="project" value="Ensembl"/>
</dbReference>
<dbReference type="GO" id="GO:0045198">
    <property type="term" value="P:establishment of epithelial cell apical/basal polarity"/>
    <property type="evidence" value="ECO:0007669"/>
    <property type="project" value="Ensembl"/>
</dbReference>
<dbReference type="GO" id="GO:0030198">
    <property type="term" value="P:extracellular matrix organization"/>
    <property type="evidence" value="ECO:0007669"/>
    <property type="project" value="Ensembl"/>
</dbReference>
<dbReference type="GO" id="GO:0007507">
    <property type="term" value="P:heart development"/>
    <property type="evidence" value="ECO:0000315"/>
    <property type="project" value="DFLAT"/>
</dbReference>
<dbReference type="GO" id="GO:0001701">
    <property type="term" value="P:in utero embryonic development"/>
    <property type="evidence" value="ECO:0000315"/>
    <property type="project" value="DFLAT"/>
</dbReference>
<dbReference type="GO" id="GO:0048371">
    <property type="term" value="P:lateral mesodermal cell differentiation"/>
    <property type="evidence" value="ECO:0007669"/>
    <property type="project" value="Ensembl"/>
</dbReference>
<dbReference type="GO" id="GO:0048286">
    <property type="term" value="P:lung alveolus development"/>
    <property type="evidence" value="ECO:0007669"/>
    <property type="project" value="Ensembl"/>
</dbReference>
<dbReference type="GO" id="GO:0030324">
    <property type="term" value="P:lung development"/>
    <property type="evidence" value="ECO:0000315"/>
    <property type="project" value="DFLAT"/>
</dbReference>
<dbReference type="GO" id="GO:0060463">
    <property type="term" value="P:lung lobe morphogenesis"/>
    <property type="evidence" value="ECO:0007669"/>
    <property type="project" value="Ensembl"/>
</dbReference>
<dbReference type="GO" id="GO:0060426">
    <property type="term" value="P:lung vasculature development"/>
    <property type="evidence" value="ECO:0000315"/>
    <property type="project" value="DFLAT"/>
</dbReference>
<dbReference type="GO" id="GO:0090131">
    <property type="term" value="P:mesenchyme migration"/>
    <property type="evidence" value="ECO:0007669"/>
    <property type="project" value="Ensembl"/>
</dbReference>
<dbReference type="GO" id="GO:0007494">
    <property type="term" value="P:midgut development"/>
    <property type="evidence" value="ECO:0000315"/>
    <property type="project" value="DFLAT"/>
</dbReference>
<dbReference type="GO" id="GO:0001763">
    <property type="term" value="P:morphogenesis of a branching structure"/>
    <property type="evidence" value="ECO:0000315"/>
    <property type="project" value="DFLAT"/>
</dbReference>
<dbReference type="GO" id="GO:0050728">
    <property type="term" value="P:negative regulation of inflammatory response"/>
    <property type="evidence" value="ECO:0007669"/>
    <property type="project" value="Ensembl"/>
</dbReference>
<dbReference type="GO" id="GO:0043305">
    <property type="term" value="P:negative regulation of mast cell degranulation"/>
    <property type="evidence" value="ECO:0007669"/>
    <property type="project" value="Ensembl"/>
</dbReference>
<dbReference type="GO" id="GO:0000122">
    <property type="term" value="P:negative regulation of transcription by RNA polymerase II"/>
    <property type="evidence" value="ECO:0007669"/>
    <property type="project" value="Ensembl"/>
</dbReference>
<dbReference type="GO" id="GO:0031016">
    <property type="term" value="P:pancreas development"/>
    <property type="evidence" value="ECO:0000315"/>
    <property type="project" value="DFLAT"/>
</dbReference>
<dbReference type="GO" id="GO:0030335">
    <property type="term" value="P:positive regulation of cell migration"/>
    <property type="evidence" value="ECO:0007669"/>
    <property type="project" value="Ensembl"/>
</dbReference>
<dbReference type="GO" id="GO:0010811">
    <property type="term" value="P:positive regulation of cell-substrate adhesion"/>
    <property type="evidence" value="ECO:0007669"/>
    <property type="project" value="Ensembl"/>
</dbReference>
<dbReference type="GO" id="GO:0045893">
    <property type="term" value="P:positive regulation of DNA-templated transcription"/>
    <property type="evidence" value="ECO:0000314"/>
    <property type="project" value="UniProtKB"/>
</dbReference>
<dbReference type="GO" id="GO:0002053">
    <property type="term" value="P:positive regulation of mesenchymal cell proliferation"/>
    <property type="evidence" value="ECO:0007669"/>
    <property type="project" value="Ensembl"/>
</dbReference>
<dbReference type="GO" id="GO:0045944">
    <property type="term" value="P:positive regulation of transcription by RNA polymerase II"/>
    <property type="evidence" value="ECO:0000315"/>
    <property type="project" value="NTNU_SB"/>
</dbReference>
<dbReference type="GO" id="GO:0006357">
    <property type="term" value="P:regulation of transcription by RNA polymerase II"/>
    <property type="evidence" value="ECO:0000318"/>
    <property type="project" value="GO_Central"/>
</dbReference>
<dbReference type="GO" id="GO:0030323">
    <property type="term" value="P:respiratory tube development"/>
    <property type="evidence" value="ECO:0000315"/>
    <property type="project" value="DFLAT"/>
</dbReference>
<dbReference type="GO" id="GO:0060461">
    <property type="term" value="P:right lung morphogenesis"/>
    <property type="evidence" value="ECO:0007669"/>
    <property type="project" value="Ensembl"/>
</dbReference>
<dbReference type="GO" id="GO:0051145">
    <property type="term" value="P:smooth muscle cell differentiation"/>
    <property type="evidence" value="ECO:0007669"/>
    <property type="project" value="Ensembl"/>
</dbReference>
<dbReference type="GO" id="GO:0007224">
    <property type="term" value="P:smoothened signaling pathway"/>
    <property type="evidence" value="ECO:0007669"/>
    <property type="project" value="Ensembl"/>
</dbReference>
<dbReference type="GO" id="GO:0001756">
    <property type="term" value="P:somitogenesis"/>
    <property type="evidence" value="ECO:0007669"/>
    <property type="project" value="Ensembl"/>
</dbReference>
<dbReference type="GO" id="GO:0060438">
    <property type="term" value="P:trachea development"/>
    <property type="evidence" value="ECO:0000315"/>
    <property type="project" value="DFLAT"/>
</dbReference>
<dbReference type="GO" id="GO:0072189">
    <property type="term" value="P:ureter development"/>
    <property type="evidence" value="ECO:0000315"/>
    <property type="project" value="DFLAT"/>
</dbReference>
<dbReference type="GO" id="GO:0001570">
    <property type="term" value="P:vasculogenesis"/>
    <property type="evidence" value="ECO:0007669"/>
    <property type="project" value="Ensembl"/>
</dbReference>
<dbReference type="GO" id="GO:0060841">
    <property type="term" value="P:venous blood vessel development"/>
    <property type="evidence" value="ECO:0000315"/>
    <property type="project" value="DFLAT"/>
</dbReference>
<dbReference type="CDD" id="cd20049">
    <property type="entry name" value="FH_FOXF1"/>
    <property type="match status" value="1"/>
</dbReference>
<dbReference type="FunFam" id="1.10.10.10:FF:000071">
    <property type="entry name" value="Forkhead box F1"/>
    <property type="match status" value="1"/>
</dbReference>
<dbReference type="Gene3D" id="1.10.10.10">
    <property type="entry name" value="Winged helix-like DNA-binding domain superfamily/Winged helix DNA-binding domain"/>
    <property type="match status" value="1"/>
</dbReference>
<dbReference type="InterPro" id="IPR001766">
    <property type="entry name" value="Fork_head_dom"/>
</dbReference>
<dbReference type="InterPro" id="IPR051770">
    <property type="entry name" value="Forkhead_box_regulator"/>
</dbReference>
<dbReference type="InterPro" id="IPR018122">
    <property type="entry name" value="TF_fork_head_CS_1"/>
</dbReference>
<dbReference type="InterPro" id="IPR030456">
    <property type="entry name" value="TF_fork_head_CS_2"/>
</dbReference>
<dbReference type="InterPro" id="IPR036388">
    <property type="entry name" value="WH-like_DNA-bd_sf"/>
</dbReference>
<dbReference type="InterPro" id="IPR036390">
    <property type="entry name" value="WH_DNA-bd_sf"/>
</dbReference>
<dbReference type="PANTHER" id="PTHR46262">
    <property type="entry name" value="FORKHEAD BOX PROTEIN BINIOU"/>
    <property type="match status" value="1"/>
</dbReference>
<dbReference type="PANTHER" id="PTHR46262:SF1">
    <property type="entry name" value="FORKHEAD BOX PROTEIN F1"/>
    <property type="match status" value="1"/>
</dbReference>
<dbReference type="Pfam" id="PF00250">
    <property type="entry name" value="Forkhead"/>
    <property type="match status" value="1"/>
</dbReference>
<dbReference type="PRINTS" id="PR00053">
    <property type="entry name" value="FORKHEAD"/>
</dbReference>
<dbReference type="SMART" id="SM00339">
    <property type="entry name" value="FH"/>
    <property type="match status" value="1"/>
</dbReference>
<dbReference type="SUPFAM" id="SSF46785">
    <property type="entry name" value="Winged helix' DNA-binding domain"/>
    <property type="match status" value="1"/>
</dbReference>
<dbReference type="PROSITE" id="PS00657">
    <property type="entry name" value="FORK_HEAD_1"/>
    <property type="match status" value="1"/>
</dbReference>
<dbReference type="PROSITE" id="PS00658">
    <property type="entry name" value="FORK_HEAD_2"/>
    <property type="match status" value="1"/>
</dbReference>
<dbReference type="PROSITE" id="PS50039">
    <property type="entry name" value="FORK_HEAD_3"/>
    <property type="match status" value="1"/>
</dbReference>
<name>FOXF1_HUMAN</name>